<keyword id="KW-0687">Ribonucleoprotein</keyword>
<keyword id="KW-0689">Ribosomal protein</keyword>
<keyword id="KW-0694">RNA-binding</keyword>
<keyword id="KW-0699">rRNA-binding</keyword>
<keyword id="KW-0820">tRNA-binding</keyword>
<protein>
    <recommendedName>
        <fullName evidence="1">Small ribosomal subunit protein uS7</fullName>
    </recommendedName>
    <alternativeName>
        <fullName evidence="2">30S ribosomal protein S7</fullName>
    </alternativeName>
</protein>
<evidence type="ECO:0000255" key="1">
    <source>
        <dbReference type="HAMAP-Rule" id="MF_00480"/>
    </source>
</evidence>
<evidence type="ECO:0000305" key="2"/>
<name>RS7_CLOP1</name>
<proteinExistence type="inferred from homology"/>
<organism>
    <name type="scientific">Clostridium perfringens (strain ATCC 13124 / DSM 756 / JCM 1290 / NCIMB 6125 / NCTC 8237 / Type A)</name>
    <dbReference type="NCBI Taxonomy" id="195103"/>
    <lineage>
        <taxon>Bacteria</taxon>
        <taxon>Bacillati</taxon>
        <taxon>Bacillota</taxon>
        <taxon>Clostridia</taxon>
        <taxon>Eubacteriales</taxon>
        <taxon>Clostridiaceae</taxon>
        <taxon>Clostridium</taxon>
    </lineage>
</organism>
<dbReference type="EMBL" id="CP000246">
    <property type="protein sequence ID" value="ABG83600.1"/>
    <property type="molecule type" value="Genomic_DNA"/>
</dbReference>
<dbReference type="RefSeq" id="WP_003452182.1">
    <property type="nucleotide sequence ID" value="NC_008261.1"/>
</dbReference>
<dbReference type="SMR" id="Q0TMP2"/>
<dbReference type="STRING" id="195103.CPF_2718"/>
<dbReference type="PaxDb" id="195103-CPF_2718"/>
<dbReference type="GeneID" id="93001005"/>
<dbReference type="KEGG" id="cpf:CPF_2718"/>
<dbReference type="eggNOG" id="COG0049">
    <property type="taxonomic scope" value="Bacteria"/>
</dbReference>
<dbReference type="HOGENOM" id="CLU_072226_1_1_9"/>
<dbReference type="Proteomes" id="UP000001823">
    <property type="component" value="Chromosome"/>
</dbReference>
<dbReference type="GO" id="GO:0015935">
    <property type="term" value="C:small ribosomal subunit"/>
    <property type="evidence" value="ECO:0007669"/>
    <property type="project" value="InterPro"/>
</dbReference>
<dbReference type="GO" id="GO:0019843">
    <property type="term" value="F:rRNA binding"/>
    <property type="evidence" value="ECO:0007669"/>
    <property type="project" value="UniProtKB-UniRule"/>
</dbReference>
<dbReference type="GO" id="GO:0003735">
    <property type="term" value="F:structural constituent of ribosome"/>
    <property type="evidence" value="ECO:0007669"/>
    <property type="project" value="InterPro"/>
</dbReference>
<dbReference type="GO" id="GO:0000049">
    <property type="term" value="F:tRNA binding"/>
    <property type="evidence" value="ECO:0007669"/>
    <property type="project" value="UniProtKB-UniRule"/>
</dbReference>
<dbReference type="GO" id="GO:0006412">
    <property type="term" value="P:translation"/>
    <property type="evidence" value="ECO:0007669"/>
    <property type="project" value="UniProtKB-UniRule"/>
</dbReference>
<dbReference type="CDD" id="cd14869">
    <property type="entry name" value="uS7_Bacteria"/>
    <property type="match status" value="1"/>
</dbReference>
<dbReference type="FunFam" id="1.10.455.10:FF:000001">
    <property type="entry name" value="30S ribosomal protein S7"/>
    <property type="match status" value="1"/>
</dbReference>
<dbReference type="Gene3D" id="1.10.455.10">
    <property type="entry name" value="Ribosomal protein S7 domain"/>
    <property type="match status" value="1"/>
</dbReference>
<dbReference type="HAMAP" id="MF_00480_B">
    <property type="entry name" value="Ribosomal_uS7_B"/>
    <property type="match status" value="1"/>
</dbReference>
<dbReference type="InterPro" id="IPR000235">
    <property type="entry name" value="Ribosomal_uS7"/>
</dbReference>
<dbReference type="InterPro" id="IPR005717">
    <property type="entry name" value="Ribosomal_uS7_bac/org-type"/>
</dbReference>
<dbReference type="InterPro" id="IPR020606">
    <property type="entry name" value="Ribosomal_uS7_CS"/>
</dbReference>
<dbReference type="InterPro" id="IPR023798">
    <property type="entry name" value="Ribosomal_uS7_dom"/>
</dbReference>
<dbReference type="InterPro" id="IPR036823">
    <property type="entry name" value="Ribosomal_uS7_dom_sf"/>
</dbReference>
<dbReference type="NCBIfam" id="TIGR01029">
    <property type="entry name" value="rpsG_bact"/>
    <property type="match status" value="1"/>
</dbReference>
<dbReference type="PANTHER" id="PTHR11205">
    <property type="entry name" value="RIBOSOMAL PROTEIN S7"/>
    <property type="match status" value="1"/>
</dbReference>
<dbReference type="Pfam" id="PF00177">
    <property type="entry name" value="Ribosomal_S7"/>
    <property type="match status" value="1"/>
</dbReference>
<dbReference type="PIRSF" id="PIRSF002122">
    <property type="entry name" value="RPS7p_RPS7a_RPS5e_RPS7o"/>
    <property type="match status" value="1"/>
</dbReference>
<dbReference type="SUPFAM" id="SSF47973">
    <property type="entry name" value="Ribosomal protein S7"/>
    <property type="match status" value="1"/>
</dbReference>
<dbReference type="PROSITE" id="PS00052">
    <property type="entry name" value="RIBOSOMAL_S7"/>
    <property type="match status" value="1"/>
</dbReference>
<accession>Q0TMP2</accession>
<gene>
    <name evidence="1" type="primary">rpsG</name>
    <name type="ordered locus">CPF_2718</name>
</gene>
<reference key="1">
    <citation type="journal article" date="2006" name="Genome Res.">
        <title>Skewed genomic variability in strains of the toxigenic bacterial pathogen, Clostridium perfringens.</title>
        <authorList>
            <person name="Myers G.S.A."/>
            <person name="Rasko D.A."/>
            <person name="Cheung J.K."/>
            <person name="Ravel J."/>
            <person name="Seshadri R."/>
            <person name="DeBoy R.T."/>
            <person name="Ren Q."/>
            <person name="Varga J."/>
            <person name="Awad M.M."/>
            <person name="Brinkac L.M."/>
            <person name="Daugherty S.C."/>
            <person name="Haft D.H."/>
            <person name="Dodson R.J."/>
            <person name="Madupu R."/>
            <person name="Nelson W.C."/>
            <person name="Rosovitz M.J."/>
            <person name="Sullivan S.A."/>
            <person name="Khouri H."/>
            <person name="Dimitrov G.I."/>
            <person name="Watkins K.L."/>
            <person name="Mulligan S."/>
            <person name="Benton J."/>
            <person name="Radune D."/>
            <person name="Fisher D.J."/>
            <person name="Atkins H.S."/>
            <person name="Hiscox T."/>
            <person name="Jost B.H."/>
            <person name="Billington S.J."/>
            <person name="Songer J.G."/>
            <person name="McClane B.A."/>
            <person name="Titball R.W."/>
            <person name="Rood J.I."/>
            <person name="Melville S.B."/>
            <person name="Paulsen I.T."/>
        </authorList>
    </citation>
    <scope>NUCLEOTIDE SEQUENCE [LARGE SCALE GENOMIC DNA]</scope>
    <source>
        <strain>ATCC 13124 / DSM 756 / JCM 1290 / NCIMB 6125 / NCTC 8237 / S 107 / Type A</strain>
    </source>
</reference>
<feature type="chain" id="PRO_1000014180" description="Small ribosomal subunit protein uS7">
    <location>
        <begin position="1"/>
        <end position="156"/>
    </location>
</feature>
<sequence length="156" mass="17832">MPRKGHIAKRDVLPDPVYNSKVVTKLINNVMEDGKKGVAQKICYDAFQIINEKTGRDAMEVFEEAMNNIMPLLEVKARRIGGANYQVPIEVRPERRQTLGLRWLLAASRKRGEKYMRERLAGELMDAANNTGAAVKKREDTHKMAEANKAFAHYRY</sequence>
<comment type="function">
    <text evidence="1">One of the primary rRNA binding proteins, it binds directly to 16S rRNA where it nucleates assembly of the head domain of the 30S subunit. Is located at the subunit interface close to the decoding center, probably blocks exit of the E-site tRNA.</text>
</comment>
<comment type="subunit">
    <text evidence="1">Part of the 30S ribosomal subunit. Contacts proteins S9 and S11.</text>
</comment>
<comment type="similarity">
    <text evidence="1">Belongs to the universal ribosomal protein uS7 family.</text>
</comment>